<sequence>MAEFPDDQAARLCDNCKKEIPVFNFTIHEIHCQRNIGVCPVCKEPFPKSDMDIHVATEHCQVTCKCNKKLEKRQLKQHVETECPLRLAVCQHCDLELSVVKLKEHEDYCGARTELCGSCGRNVLVKELQTHPAVCGRVEEEKRSEAAVPPEAYDEPWSQDRIWIASQLLRQIEALDPPMRLPGRPLRAFEADPFYSRTASQRGVTAHFPIQNNLFEEQERQERNRSHQSPKDSAENSAHLDFMLALSLQNEGQASSMVEQGFWESVPEADPARAGPTSLGDIKGAADETLLPCEFCEELYPEELLIDHQTSCNPSHALRSLNTGSSSIRGVEDPGAIFQNFLQQATSNQLDTLMGLSSSAAVEDSIIIPCEFCGVQLEEEVLFHHQDQCDQRPATANHRAMEGIPTQDSQPEDRSPELSRRRVKHQGDLSSGYMDDVKQESVKGSTYSLSPNRTMNNVSTCNRLLNSSGPRSDCQRSPPGVLKLNNSGSQDIRGRIRGSQNGPIASAHAPVIHSIRNLYPENLAPSFPHGSPGRFGASEGSRSSRVTPTAASYHSRAAKAKPPKQQGAGDAEEEEE</sequence>
<reference key="1">
    <citation type="journal article" date="2004" name="Nature">
        <title>Genome sequence of the Brown Norway rat yields insights into mammalian evolution.</title>
        <authorList>
            <person name="Gibbs R.A."/>
            <person name="Weinstock G.M."/>
            <person name="Metzker M.L."/>
            <person name="Muzny D.M."/>
            <person name="Sodergren E.J."/>
            <person name="Scherer S."/>
            <person name="Scott G."/>
            <person name="Steffen D."/>
            <person name="Worley K.C."/>
            <person name="Burch P.E."/>
            <person name="Okwuonu G."/>
            <person name="Hines S."/>
            <person name="Lewis L."/>
            <person name="Deramo C."/>
            <person name="Delgado O."/>
            <person name="Dugan-Rocha S."/>
            <person name="Miner G."/>
            <person name="Morgan M."/>
            <person name="Hawes A."/>
            <person name="Gill R."/>
            <person name="Holt R.A."/>
            <person name="Adams M.D."/>
            <person name="Amanatides P.G."/>
            <person name="Baden-Tillson H."/>
            <person name="Barnstead M."/>
            <person name="Chin S."/>
            <person name="Evans C.A."/>
            <person name="Ferriera S."/>
            <person name="Fosler C."/>
            <person name="Glodek A."/>
            <person name="Gu Z."/>
            <person name="Jennings D."/>
            <person name="Kraft C.L."/>
            <person name="Nguyen T."/>
            <person name="Pfannkoch C.M."/>
            <person name="Sitter C."/>
            <person name="Sutton G.G."/>
            <person name="Venter J.C."/>
            <person name="Woodage T."/>
            <person name="Smith D."/>
            <person name="Lee H.-M."/>
            <person name="Gustafson E."/>
            <person name="Cahill P."/>
            <person name="Kana A."/>
            <person name="Doucette-Stamm L."/>
            <person name="Weinstock K."/>
            <person name="Fechtel K."/>
            <person name="Weiss R.B."/>
            <person name="Dunn D.M."/>
            <person name="Green E.D."/>
            <person name="Blakesley R.W."/>
            <person name="Bouffard G.G."/>
            <person name="De Jong P.J."/>
            <person name="Osoegawa K."/>
            <person name="Zhu B."/>
            <person name="Marra M."/>
            <person name="Schein J."/>
            <person name="Bosdet I."/>
            <person name="Fjell C."/>
            <person name="Jones S."/>
            <person name="Krzywinski M."/>
            <person name="Mathewson C."/>
            <person name="Siddiqui A."/>
            <person name="Wye N."/>
            <person name="McPherson J."/>
            <person name="Zhao S."/>
            <person name="Fraser C.M."/>
            <person name="Shetty J."/>
            <person name="Shatsman S."/>
            <person name="Geer K."/>
            <person name="Chen Y."/>
            <person name="Abramzon S."/>
            <person name="Nierman W.C."/>
            <person name="Havlak P.H."/>
            <person name="Chen R."/>
            <person name="Durbin K.J."/>
            <person name="Egan A."/>
            <person name="Ren Y."/>
            <person name="Song X.-Z."/>
            <person name="Li B."/>
            <person name="Liu Y."/>
            <person name="Qin X."/>
            <person name="Cawley S."/>
            <person name="Cooney A.J."/>
            <person name="D'Souza L.M."/>
            <person name="Martin K."/>
            <person name="Wu J.Q."/>
            <person name="Gonzalez-Garay M.L."/>
            <person name="Jackson A.R."/>
            <person name="Kalafus K.J."/>
            <person name="McLeod M.P."/>
            <person name="Milosavljevic A."/>
            <person name="Virk D."/>
            <person name="Volkov A."/>
            <person name="Wheeler D.A."/>
            <person name="Zhang Z."/>
            <person name="Bailey J.A."/>
            <person name="Eichler E.E."/>
            <person name="Tuzun E."/>
            <person name="Birney E."/>
            <person name="Mongin E."/>
            <person name="Ureta-Vidal A."/>
            <person name="Woodwark C."/>
            <person name="Zdobnov E."/>
            <person name="Bork P."/>
            <person name="Suyama M."/>
            <person name="Torrents D."/>
            <person name="Alexandersson M."/>
            <person name="Trask B.J."/>
            <person name="Young J.M."/>
            <person name="Huang H."/>
            <person name="Wang H."/>
            <person name="Xing H."/>
            <person name="Daniels S."/>
            <person name="Gietzen D."/>
            <person name="Schmidt J."/>
            <person name="Stevens K."/>
            <person name="Vitt U."/>
            <person name="Wingrove J."/>
            <person name="Camara F."/>
            <person name="Mar Alba M."/>
            <person name="Abril J.F."/>
            <person name="Guigo R."/>
            <person name="Smit A."/>
            <person name="Dubchak I."/>
            <person name="Rubin E.M."/>
            <person name="Couronne O."/>
            <person name="Poliakov A."/>
            <person name="Huebner N."/>
            <person name="Ganten D."/>
            <person name="Goesele C."/>
            <person name="Hummel O."/>
            <person name="Kreitler T."/>
            <person name="Lee Y.-A."/>
            <person name="Monti J."/>
            <person name="Schulz H."/>
            <person name="Zimdahl H."/>
            <person name="Himmelbauer H."/>
            <person name="Lehrach H."/>
            <person name="Jacob H.J."/>
            <person name="Bromberg S."/>
            <person name="Gullings-Handley J."/>
            <person name="Jensen-Seaman M.I."/>
            <person name="Kwitek A.E."/>
            <person name="Lazar J."/>
            <person name="Pasko D."/>
            <person name="Tonellato P.J."/>
            <person name="Twigger S."/>
            <person name="Ponting C.P."/>
            <person name="Duarte J.M."/>
            <person name="Rice S."/>
            <person name="Goodstadt L."/>
            <person name="Beatson S.A."/>
            <person name="Emes R.D."/>
            <person name="Winter E.E."/>
            <person name="Webber C."/>
            <person name="Brandt P."/>
            <person name="Nyakatura G."/>
            <person name="Adetobi M."/>
            <person name="Chiaromonte F."/>
            <person name="Elnitski L."/>
            <person name="Eswara P."/>
            <person name="Hardison R.C."/>
            <person name="Hou M."/>
            <person name="Kolbe D."/>
            <person name="Makova K."/>
            <person name="Miller W."/>
            <person name="Nekrutenko A."/>
            <person name="Riemer C."/>
            <person name="Schwartz S."/>
            <person name="Taylor J."/>
            <person name="Yang S."/>
            <person name="Zhang Y."/>
            <person name="Lindpaintner K."/>
            <person name="Andrews T.D."/>
            <person name="Caccamo M."/>
            <person name="Clamp M."/>
            <person name="Clarke L."/>
            <person name="Curwen V."/>
            <person name="Durbin R.M."/>
            <person name="Eyras E."/>
            <person name="Searle S.M."/>
            <person name="Cooper G.M."/>
            <person name="Batzoglou S."/>
            <person name="Brudno M."/>
            <person name="Sidow A."/>
            <person name="Stone E.A."/>
            <person name="Payseur B.A."/>
            <person name="Bourque G."/>
            <person name="Lopez-Otin C."/>
            <person name="Puente X.S."/>
            <person name="Chakrabarti K."/>
            <person name="Chatterji S."/>
            <person name="Dewey C."/>
            <person name="Pachter L."/>
            <person name="Bray N."/>
            <person name="Yap V.B."/>
            <person name="Caspi A."/>
            <person name="Tesler G."/>
            <person name="Pevzner P.A."/>
            <person name="Haussler D."/>
            <person name="Roskin K.M."/>
            <person name="Baertsch R."/>
            <person name="Clawson H."/>
            <person name="Furey T.S."/>
            <person name="Hinrichs A.S."/>
            <person name="Karolchik D."/>
            <person name="Kent W.J."/>
            <person name="Rosenbloom K.R."/>
            <person name="Trumbower H."/>
            <person name="Weirauch M."/>
            <person name="Cooper D.N."/>
            <person name="Stenson P.D."/>
            <person name="Ma B."/>
            <person name="Brent M."/>
            <person name="Arumugam M."/>
            <person name="Shteynberg D."/>
            <person name="Copley R.R."/>
            <person name="Taylor M.S."/>
            <person name="Riethman H."/>
            <person name="Mudunuri U."/>
            <person name="Peterson J."/>
            <person name="Guyer M."/>
            <person name="Felsenfeld A."/>
            <person name="Old S."/>
            <person name="Mockrin S."/>
            <person name="Collins F.S."/>
        </authorList>
    </citation>
    <scope>NUCLEOTIDE SEQUENCE [LARGE SCALE GENOMIC DNA]</scope>
    <source>
        <strain>Brown Norway</strain>
    </source>
</reference>
<reference key="2">
    <citation type="journal article" date="2004" name="Genome Res.">
        <title>The status, quality, and expansion of the NIH full-length cDNA project: the Mammalian Gene Collection (MGC).</title>
        <authorList>
            <consortium name="The MGC Project Team"/>
        </authorList>
    </citation>
    <scope>NUCLEOTIDE SEQUENCE [LARGE SCALE MRNA] (ISOFORM 2)</scope>
    <source>
        <tissue>Spleen</tissue>
    </source>
</reference>
<reference key="3">
    <citation type="journal article" date="2002" name="J. Biol. Chem.">
        <title>Cytokine-induced down-regulation of zfm1/splicing factor-1 promotes smooth muscle cell proliferation.</title>
        <authorList>
            <person name="Cattaruzza M."/>
            <person name="Schafer K."/>
            <person name="Hecker M."/>
        </authorList>
    </citation>
    <scope>NUCLEOTIDE SEQUENCE [MRNA] OF 300-482 (ISOFORM 1)</scope>
    <scope>TISSUE SPECIFICITY</scope>
    <source>
        <strain>Wistar Kyoto</strain>
    </source>
</reference>
<reference key="4">
    <citation type="journal article" date="2012" name="Nat. Commun.">
        <title>Quantitative maps of protein phosphorylation sites across 14 different rat organs and tissues.</title>
        <authorList>
            <person name="Lundby A."/>
            <person name="Secher A."/>
            <person name="Lage K."/>
            <person name="Nordsborg N.B."/>
            <person name="Dmytriyev A."/>
            <person name="Lundby C."/>
            <person name="Olsen J.V."/>
        </authorList>
    </citation>
    <scope>PHOSPHORYLATION [LARGE SCALE ANALYSIS] AT SER-415; SER-450 AND SER-531</scope>
    <scope>IDENTIFICATION BY MASS SPECTROMETRY [LARGE SCALE ANALYSIS]</scope>
</reference>
<gene>
    <name type="primary">Trafd1</name>
    <name type="synonym">Fln29</name>
</gene>
<dbReference type="EMBL" id="AABR03082041">
    <property type="status" value="NOT_ANNOTATED_CDS"/>
    <property type="molecule type" value="Genomic_DNA"/>
</dbReference>
<dbReference type="EMBL" id="BC088344">
    <property type="protein sequence ID" value="AAH88344.1"/>
    <property type="molecule type" value="mRNA"/>
</dbReference>
<dbReference type="EMBL" id="AF329825">
    <property type="protein sequence ID" value="AAK32141.1"/>
    <property type="status" value="ALT_FRAME"/>
    <property type="molecule type" value="mRNA"/>
</dbReference>
<dbReference type="FunCoup" id="Q99MM4">
    <property type="interactions" value="2326"/>
</dbReference>
<dbReference type="STRING" id="10116.ENSRNOP00000072077"/>
<dbReference type="GlyGen" id="Q99MM4">
    <property type="glycosylation" value="1 site"/>
</dbReference>
<dbReference type="iPTMnet" id="Q99MM4"/>
<dbReference type="PhosphoSitePlus" id="Q99MM4"/>
<dbReference type="PaxDb" id="10116-ENSRNOP00000036651"/>
<dbReference type="PeptideAtlas" id="Q99MM4"/>
<dbReference type="UCSC" id="RGD:620171">
    <molecule id="Q99MM4-1"/>
    <property type="organism name" value="rat"/>
</dbReference>
<dbReference type="AGR" id="RGD:620171"/>
<dbReference type="RGD" id="620171">
    <property type="gene designation" value="Trafd1"/>
</dbReference>
<dbReference type="eggNOG" id="ENOG502QQRU">
    <property type="taxonomic scope" value="Eukaryota"/>
</dbReference>
<dbReference type="InParanoid" id="Q99MM4"/>
<dbReference type="PhylomeDB" id="Q99MM4"/>
<dbReference type="PRO" id="PR:Q99MM4"/>
<dbReference type="Proteomes" id="UP000002494">
    <property type="component" value="Unplaced"/>
</dbReference>
<dbReference type="GO" id="GO:0005739">
    <property type="term" value="C:mitochondrion"/>
    <property type="evidence" value="ECO:0000318"/>
    <property type="project" value="GO_Central"/>
</dbReference>
<dbReference type="GO" id="GO:0008270">
    <property type="term" value="F:zinc ion binding"/>
    <property type="evidence" value="ECO:0007669"/>
    <property type="project" value="UniProtKB-KW"/>
</dbReference>
<dbReference type="GO" id="GO:0045824">
    <property type="term" value="P:negative regulation of innate immune response"/>
    <property type="evidence" value="ECO:0000250"/>
    <property type="project" value="UniProtKB"/>
</dbReference>
<dbReference type="GO" id="GO:0034097">
    <property type="term" value="P:response to cytokine"/>
    <property type="evidence" value="ECO:0000270"/>
    <property type="project" value="RGD"/>
</dbReference>
<dbReference type="FunFam" id="3.30.40.10:FF:000378">
    <property type="entry name" value="TRAF-type zinc finger domain-containing 1"/>
    <property type="match status" value="1"/>
</dbReference>
<dbReference type="FunFam" id="3.30.40.10:FF:000402">
    <property type="entry name" value="TRAF-type zinc finger domain-containing protein 1"/>
    <property type="match status" value="1"/>
</dbReference>
<dbReference type="Gene3D" id="3.30.40.10">
    <property type="entry name" value="Zinc/RING finger domain, C3HC4 (zinc finger)"/>
    <property type="match status" value="2"/>
</dbReference>
<dbReference type="InterPro" id="IPR051986">
    <property type="entry name" value="Innate_Immune_Apopt_Reg"/>
</dbReference>
<dbReference type="InterPro" id="IPR049439">
    <property type="entry name" value="TRAFD1-XIAF1_Znf"/>
</dbReference>
<dbReference type="InterPro" id="IPR013083">
    <property type="entry name" value="Znf_RING/FYVE/PHD"/>
</dbReference>
<dbReference type="InterPro" id="IPR001293">
    <property type="entry name" value="Znf_TRAF"/>
</dbReference>
<dbReference type="PANTHER" id="PTHR16295:SF19">
    <property type="entry name" value="TRAF-TYPE ZINC FINGER DOMAIN-CONTAINING PROTEIN 1"/>
    <property type="match status" value="1"/>
</dbReference>
<dbReference type="PANTHER" id="PTHR16295">
    <property type="entry name" value="TRAF-TYPE ZINC FINGER PROTEIN-RELATED"/>
    <property type="match status" value="1"/>
</dbReference>
<dbReference type="Pfam" id="PF21366">
    <property type="entry name" value="TRAFD1-XIAF1_ZnF"/>
    <property type="match status" value="1"/>
</dbReference>
<dbReference type="PROSITE" id="PS50145">
    <property type="entry name" value="ZF_TRAF"/>
    <property type="match status" value="1"/>
</dbReference>
<protein>
    <recommendedName>
        <fullName>TRAF-type zinc finger domain-containing protein 1</fullName>
    </recommendedName>
    <alternativeName>
        <fullName>Protein FLN29</fullName>
    </alternativeName>
</protein>
<organism>
    <name type="scientific">Rattus norvegicus</name>
    <name type="common">Rat</name>
    <dbReference type="NCBI Taxonomy" id="10116"/>
    <lineage>
        <taxon>Eukaryota</taxon>
        <taxon>Metazoa</taxon>
        <taxon>Chordata</taxon>
        <taxon>Craniata</taxon>
        <taxon>Vertebrata</taxon>
        <taxon>Euteleostomi</taxon>
        <taxon>Mammalia</taxon>
        <taxon>Eutheria</taxon>
        <taxon>Euarchontoglires</taxon>
        <taxon>Glires</taxon>
        <taxon>Rodentia</taxon>
        <taxon>Myomorpha</taxon>
        <taxon>Muroidea</taxon>
        <taxon>Muridae</taxon>
        <taxon>Murinae</taxon>
        <taxon>Rattus</taxon>
    </lineage>
</organism>
<feature type="initiator methionine" description="Removed" evidence="2">
    <location>
        <position position="1"/>
    </location>
</feature>
<feature type="chain" id="PRO_0000278460" description="TRAF-type zinc finger domain-containing protein 1">
    <location>
        <begin position="2"/>
        <end position="576"/>
    </location>
</feature>
<feature type="zinc finger region" description="TRAF-type" evidence="3">
    <location>
        <begin position="27"/>
        <end position="103"/>
    </location>
</feature>
<feature type="region of interest" description="Disordered" evidence="4">
    <location>
        <begin position="402"/>
        <end position="432"/>
    </location>
</feature>
<feature type="region of interest" description="Disordered" evidence="4">
    <location>
        <begin position="465"/>
        <end position="491"/>
    </location>
</feature>
<feature type="region of interest" description="Disordered" evidence="4">
    <location>
        <begin position="529"/>
        <end position="576"/>
    </location>
</feature>
<feature type="compositionally biased region" description="Basic and acidic residues" evidence="4">
    <location>
        <begin position="411"/>
        <end position="420"/>
    </location>
</feature>
<feature type="compositionally biased region" description="Polar residues" evidence="4">
    <location>
        <begin position="540"/>
        <end position="552"/>
    </location>
</feature>
<feature type="modified residue" description="N-acetylalanine" evidence="2">
    <location>
        <position position="2"/>
    </location>
</feature>
<feature type="modified residue" description="Phosphoserine" evidence="2">
    <location>
        <position position="278"/>
    </location>
</feature>
<feature type="modified residue" description="Phosphoserine" evidence="2">
    <location>
        <position position="320"/>
    </location>
</feature>
<feature type="modified residue" description="Phosphoserine" evidence="2">
    <location>
        <position position="326"/>
    </location>
</feature>
<feature type="modified residue" description="Phosphoserine" evidence="2">
    <location>
        <position position="327"/>
    </location>
</feature>
<feature type="modified residue" description="Phosphoserine" evidence="2">
    <location>
        <position position="409"/>
    </location>
</feature>
<feature type="modified residue" description="Phosphoserine" evidence="8">
    <location>
        <position position="415"/>
    </location>
</feature>
<feature type="modified residue" description="Phosphoserine" evidence="2">
    <location>
        <position position="430"/>
    </location>
</feature>
<feature type="modified residue" description="Phosphoserine" evidence="8">
    <location>
        <position position="450"/>
    </location>
</feature>
<feature type="modified residue" description="Phosphoserine" evidence="8">
    <location>
        <position position="531"/>
    </location>
</feature>
<feature type="splice variant" id="VSP_023295" description="In isoform 2." evidence="6">
    <location>
        <begin position="1"/>
        <end position="433"/>
    </location>
</feature>
<feature type="splice variant" id="VSP_023296" description="In isoform 2." evidence="6">
    <original>A</original>
    <variation>AGGR</variation>
    <location>
        <position position="537"/>
    </location>
</feature>
<feature type="splice variant" id="VSP_023297" description="In isoform 2." evidence="6">
    <original>E</original>
    <variation>EEE</variation>
    <location>
        <position position="576"/>
    </location>
</feature>
<feature type="sequence conflict" description="In Ref. 3; AAK32141." evidence="7" ref="3">
    <original>N</original>
    <variation>Y</variation>
    <location>
        <position position="462"/>
    </location>
</feature>
<comment type="function">
    <text evidence="1">Negative feedback regulator that controls excessive innate immune responses. Regulates both Toll-like receptor 4 (TLR4) and DDX58/RIG1-like helicases (RLH) pathways. May inhibit the LTR pathway by direct interaction with TRAF6 and attenuation of NF-kappa-B activation. May negatively regulate the RLH pathway downstream from MAVS and upstream of NF-kappa-B and IRF3 (By similarity).</text>
</comment>
<comment type="subunit">
    <text evidence="1">Interacts with MAVS, TICAM1, TRAF1, TRAF2, TRAF3 and TRAF6.</text>
</comment>
<comment type="alternative products">
    <event type="alternative splicing"/>
    <isoform>
        <id>Q99MM4-1</id>
        <name>1</name>
        <sequence type="displayed"/>
    </isoform>
    <isoform>
        <id>Q99MM4-2</id>
        <name>2</name>
        <sequence type="described" ref="VSP_023295 VSP_023296 VSP_023297"/>
    </isoform>
</comment>
<comment type="tissue specificity">
    <text evidence="5">Expressed in vascular smooth muscle cells.</text>
</comment>
<comment type="sequence caution" evidence="7">
    <conflict type="frameshift">
        <sequence resource="EMBL-CDS" id="AAK32141"/>
    </conflict>
</comment>
<evidence type="ECO:0000250" key="1"/>
<evidence type="ECO:0000250" key="2">
    <source>
        <dbReference type="UniProtKB" id="O14545"/>
    </source>
</evidence>
<evidence type="ECO:0000255" key="3">
    <source>
        <dbReference type="PROSITE-ProRule" id="PRU00207"/>
    </source>
</evidence>
<evidence type="ECO:0000256" key="4">
    <source>
        <dbReference type="SAM" id="MobiDB-lite"/>
    </source>
</evidence>
<evidence type="ECO:0000269" key="5">
    <source>
    </source>
</evidence>
<evidence type="ECO:0000303" key="6">
    <source>
    </source>
</evidence>
<evidence type="ECO:0000305" key="7"/>
<evidence type="ECO:0007744" key="8">
    <source>
    </source>
</evidence>
<proteinExistence type="evidence at protein level"/>
<accession>Q99MM4</accession>
<accession>Q5M806</accession>
<name>TRAD1_RAT</name>
<keyword id="KW-0007">Acetylation</keyword>
<keyword id="KW-0025">Alternative splicing</keyword>
<keyword id="KW-0479">Metal-binding</keyword>
<keyword id="KW-0597">Phosphoprotein</keyword>
<keyword id="KW-1185">Reference proteome</keyword>
<keyword id="KW-0862">Zinc</keyword>
<keyword id="KW-0863">Zinc-finger</keyword>